<gene>
    <name type="ORF">DDB_G0275657</name>
</gene>
<dbReference type="EMBL" id="AAFI02000013">
    <property type="protein sequence ID" value="EAL69579.1"/>
    <property type="molecule type" value="Genomic_DNA"/>
</dbReference>
<dbReference type="RefSeq" id="XP_643523.1">
    <property type="nucleotide sequence ID" value="XM_638431.1"/>
</dbReference>
<dbReference type="PaxDb" id="44689-DDB0167239"/>
<dbReference type="EnsemblProtists" id="EAL69579">
    <property type="protein sequence ID" value="EAL69579"/>
    <property type="gene ID" value="DDB_G0275657"/>
</dbReference>
<dbReference type="GeneID" id="8620104"/>
<dbReference type="KEGG" id="ddi:DDB_G0275657"/>
<dbReference type="VEuPathDB" id="AmoebaDB:DDB_G0275657"/>
<dbReference type="HOGENOM" id="CLU_3054354_0_0_1"/>
<dbReference type="InParanoid" id="Q86H39"/>
<dbReference type="PRO" id="PR:Q86H39"/>
<dbReference type="Proteomes" id="UP000002195">
    <property type="component" value="Chromosome 2"/>
</dbReference>
<feature type="chain" id="PRO_0000348121" description="Putative uncharacterized protein DDB_G0275657">
    <location>
        <begin position="1"/>
        <end position="54"/>
    </location>
</feature>
<accession>Q86H39</accession>
<accession>Q552Z7</accession>
<name>Y7239_DICDI</name>
<reference key="1">
    <citation type="journal article" date="2002" name="Nature">
        <title>Sequence and analysis of chromosome 2 of Dictyostelium discoideum.</title>
        <authorList>
            <person name="Gloeckner G."/>
            <person name="Eichinger L."/>
            <person name="Szafranski K."/>
            <person name="Pachebat J.A."/>
            <person name="Bankier A.T."/>
            <person name="Dear P.H."/>
            <person name="Lehmann R."/>
            <person name="Baumgart C."/>
            <person name="Parra G."/>
            <person name="Abril J.F."/>
            <person name="Guigo R."/>
            <person name="Kumpf K."/>
            <person name="Tunggal B."/>
            <person name="Cox E.C."/>
            <person name="Quail M.A."/>
            <person name="Platzer M."/>
            <person name="Rosenthal A."/>
            <person name="Noegel A.A."/>
        </authorList>
    </citation>
    <scope>NUCLEOTIDE SEQUENCE [LARGE SCALE GENOMIC DNA]</scope>
    <source>
        <strain>AX4</strain>
    </source>
</reference>
<reference key="2">
    <citation type="journal article" date="2005" name="Nature">
        <title>The genome of the social amoeba Dictyostelium discoideum.</title>
        <authorList>
            <person name="Eichinger L."/>
            <person name="Pachebat J.A."/>
            <person name="Gloeckner G."/>
            <person name="Rajandream M.A."/>
            <person name="Sucgang R."/>
            <person name="Berriman M."/>
            <person name="Song J."/>
            <person name="Olsen R."/>
            <person name="Szafranski K."/>
            <person name="Xu Q."/>
            <person name="Tunggal B."/>
            <person name="Kummerfeld S."/>
            <person name="Madera M."/>
            <person name="Konfortov B.A."/>
            <person name="Rivero F."/>
            <person name="Bankier A.T."/>
            <person name="Lehmann R."/>
            <person name="Hamlin N."/>
            <person name="Davies R."/>
            <person name="Gaudet P."/>
            <person name="Fey P."/>
            <person name="Pilcher K."/>
            <person name="Chen G."/>
            <person name="Saunders D."/>
            <person name="Sodergren E.J."/>
            <person name="Davis P."/>
            <person name="Kerhornou A."/>
            <person name="Nie X."/>
            <person name="Hall N."/>
            <person name="Anjard C."/>
            <person name="Hemphill L."/>
            <person name="Bason N."/>
            <person name="Farbrother P."/>
            <person name="Desany B."/>
            <person name="Just E."/>
            <person name="Morio T."/>
            <person name="Rost R."/>
            <person name="Churcher C.M."/>
            <person name="Cooper J."/>
            <person name="Haydock S."/>
            <person name="van Driessche N."/>
            <person name="Cronin A."/>
            <person name="Goodhead I."/>
            <person name="Muzny D.M."/>
            <person name="Mourier T."/>
            <person name="Pain A."/>
            <person name="Lu M."/>
            <person name="Harper D."/>
            <person name="Lindsay R."/>
            <person name="Hauser H."/>
            <person name="James K.D."/>
            <person name="Quiles M."/>
            <person name="Madan Babu M."/>
            <person name="Saito T."/>
            <person name="Buchrieser C."/>
            <person name="Wardroper A."/>
            <person name="Felder M."/>
            <person name="Thangavelu M."/>
            <person name="Johnson D."/>
            <person name="Knights A."/>
            <person name="Loulseged H."/>
            <person name="Mungall K.L."/>
            <person name="Oliver K."/>
            <person name="Price C."/>
            <person name="Quail M.A."/>
            <person name="Urushihara H."/>
            <person name="Hernandez J."/>
            <person name="Rabbinowitsch E."/>
            <person name="Steffen D."/>
            <person name="Sanders M."/>
            <person name="Ma J."/>
            <person name="Kohara Y."/>
            <person name="Sharp S."/>
            <person name="Simmonds M.N."/>
            <person name="Spiegler S."/>
            <person name="Tivey A."/>
            <person name="Sugano S."/>
            <person name="White B."/>
            <person name="Walker D."/>
            <person name="Woodward J.R."/>
            <person name="Winckler T."/>
            <person name="Tanaka Y."/>
            <person name="Shaulsky G."/>
            <person name="Schleicher M."/>
            <person name="Weinstock G.M."/>
            <person name="Rosenthal A."/>
            <person name="Cox E.C."/>
            <person name="Chisholm R.L."/>
            <person name="Gibbs R.A."/>
            <person name="Loomis W.F."/>
            <person name="Platzer M."/>
            <person name="Kay R.R."/>
            <person name="Williams J.G."/>
            <person name="Dear P.H."/>
            <person name="Noegel A.A."/>
            <person name="Barrell B.G."/>
            <person name="Kuspa A."/>
        </authorList>
    </citation>
    <scope>NUCLEOTIDE SEQUENCE [LARGE SCALE GENOMIC DNA]</scope>
    <source>
        <strain>AX4</strain>
    </source>
</reference>
<proteinExistence type="predicted"/>
<sequence length="54" mass="6247">MNTATETVQLTKFTQVLCSSGSLGIRIRKRNDKEITNYISEIDLKHFKKKFLNS</sequence>
<organism>
    <name type="scientific">Dictyostelium discoideum</name>
    <name type="common">Social amoeba</name>
    <dbReference type="NCBI Taxonomy" id="44689"/>
    <lineage>
        <taxon>Eukaryota</taxon>
        <taxon>Amoebozoa</taxon>
        <taxon>Evosea</taxon>
        <taxon>Eumycetozoa</taxon>
        <taxon>Dictyostelia</taxon>
        <taxon>Dictyosteliales</taxon>
        <taxon>Dictyosteliaceae</taxon>
        <taxon>Dictyostelium</taxon>
    </lineage>
</organism>
<protein>
    <recommendedName>
        <fullName>Putative uncharacterized protein DDB_G0275657</fullName>
    </recommendedName>
</protein>
<keyword id="KW-1185">Reference proteome</keyword>